<sequence>MMMNGQKMAAAEVAVQLPESKMVTENIGGAAAAMRPFGRKAEVMNVLLRVLCMVTSVAALSSMVTAQQSSTVSIYGFMLPIQSKWSFSHSFEYVVGVSAVVAAHSLLQLLISVSRLLRKSPVIQSRSHAWLVFAGDQVFAYAMISAGAAASGVTNLNRTGIRHTALPNFCKPLQSFCDHVAVSIFFTFLSCFLLAASAVQEVIWLSRSKY</sequence>
<organism>
    <name type="scientific">Populus trichocarpa</name>
    <name type="common">Western balsam poplar</name>
    <name type="synonym">Populus balsamifera subsp. trichocarpa</name>
    <dbReference type="NCBI Taxonomy" id="3694"/>
    <lineage>
        <taxon>Eukaryota</taxon>
        <taxon>Viridiplantae</taxon>
        <taxon>Streptophyta</taxon>
        <taxon>Embryophyta</taxon>
        <taxon>Tracheophyta</taxon>
        <taxon>Spermatophyta</taxon>
        <taxon>Magnoliopsida</taxon>
        <taxon>eudicotyledons</taxon>
        <taxon>Gunneridae</taxon>
        <taxon>Pentapetalae</taxon>
        <taxon>rosids</taxon>
        <taxon>fabids</taxon>
        <taxon>Malpighiales</taxon>
        <taxon>Salicaceae</taxon>
        <taxon>Saliceae</taxon>
        <taxon>Populus</taxon>
    </lineage>
</organism>
<reference key="1">
    <citation type="journal article" date="2006" name="Science">
        <title>The genome of black cottonwood, Populus trichocarpa (Torr. &amp; Gray).</title>
        <authorList>
            <person name="Tuskan G.A."/>
            <person name="Difazio S."/>
            <person name="Jansson S."/>
            <person name="Bohlmann J."/>
            <person name="Grigoriev I."/>
            <person name="Hellsten U."/>
            <person name="Putnam N."/>
            <person name="Ralph S."/>
            <person name="Rombauts S."/>
            <person name="Salamov A."/>
            <person name="Schein J."/>
            <person name="Sterck L."/>
            <person name="Aerts A."/>
            <person name="Bhalerao R.R."/>
            <person name="Bhalerao R.P."/>
            <person name="Blaudez D."/>
            <person name="Boerjan W."/>
            <person name="Brun A."/>
            <person name="Brunner A."/>
            <person name="Busov V."/>
            <person name="Campbell M."/>
            <person name="Carlson J."/>
            <person name="Chalot M."/>
            <person name="Chapman J."/>
            <person name="Chen G.-L."/>
            <person name="Cooper D."/>
            <person name="Coutinho P.M."/>
            <person name="Couturier J."/>
            <person name="Covert S."/>
            <person name="Cronk Q."/>
            <person name="Cunningham R."/>
            <person name="Davis J."/>
            <person name="Degroeve S."/>
            <person name="Dejardin A."/>
            <person name="dePamphilis C.W."/>
            <person name="Detter J."/>
            <person name="Dirks B."/>
            <person name="Dubchak I."/>
            <person name="Duplessis S."/>
            <person name="Ehlting J."/>
            <person name="Ellis B."/>
            <person name="Gendler K."/>
            <person name="Goodstein D."/>
            <person name="Gribskov M."/>
            <person name="Grimwood J."/>
            <person name="Groover A."/>
            <person name="Gunter L."/>
            <person name="Hamberger B."/>
            <person name="Heinze B."/>
            <person name="Helariutta Y."/>
            <person name="Henrissat B."/>
            <person name="Holligan D."/>
            <person name="Holt R."/>
            <person name="Huang W."/>
            <person name="Islam-Faridi N."/>
            <person name="Jones S."/>
            <person name="Jones-Rhoades M."/>
            <person name="Jorgensen R."/>
            <person name="Joshi C."/>
            <person name="Kangasjaervi J."/>
            <person name="Karlsson J."/>
            <person name="Kelleher C."/>
            <person name="Kirkpatrick R."/>
            <person name="Kirst M."/>
            <person name="Kohler A."/>
            <person name="Kalluri U."/>
            <person name="Larimer F."/>
            <person name="Leebens-Mack J."/>
            <person name="Leple J.-C."/>
            <person name="Locascio P."/>
            <person name="Lou Y."/>
            <person name="Lucas S."/>
            <person name="Martin F."/>
            <person name="Montanini B."/>
            <person name="Napoli C."/>
            <person name="Nelson D.R."/>
            <person name="Nelson C."/>
            <person name="Nieminen K."/>
            <person name="Nilsson O."/>
            <person name="Pereda V."/>
            <person name="Peter G."/>
            <person name="Philippe R."/>
            <person name="Pilate G."/>
            <person name="Poliakov A."/>
            <person name="Razumovskaya J."/>
            <person name="Richardson P."/>
            <person name="Rinaldi C."/>
            <person name="Ritland K."/>
            <person name="Rouze P."/>
            <person name="Ryaboy D."/>
            <person name="Schmutz J."/>
            <person name="Schrader J."/>
            <person name="Segerman B."/>
            <person name="Shin H."/>
            <person name="Siddiqui A."/>
            <person name="Sterky F."/>
            <person name="Terry A."/>
            <person name="Tsai C.-J."/>
            <person name="Uberbacher E."/>
            <person name="Unneberg P."/>
            <person name="Vahala J."/>
            <person name="Wall K."/>
            <person name="Wessler S."/>
            <person name="Yang G."/>
            <person name="Yin T."/>
            <person name="Douglas C."/>
            <person name="Marra M."/>
            <person name="Sandberg G."/>
            <person name="Van de Peer Y."/>
            <person name="Rokhsar D.S."/>
        </authorList>
    </citation>
    <scope>NUCLEOTIDE SEQUENCE [LARGE SCALE GENOMIC DNA]</scope>
    <source>
        <strain>cv. Nisqually</strain>
    </source>
</reference>
<reference key="2">
    <citation type="submission" date="2008-12" db="EMBL/GenBank/DDBJ databases">
        <authorList>
            <consortium name="US DOE Joint Genome Institute (JGI-PGF)"/>
            <person name="Grigoriev I.V."/>
            <person name="Terry A."/>
            <person name="Salamov A.A."/>
            <person name="Otillar R."/>
            <person name="Lou Y."/>
            <person name="Lucas S."/>
            <person name="Hammon N."/>
            <person name="Glavina del Rio T."/>
            <person name="Detter J."/>
            <person name="Kalin E."/>
            <person name="Tice H."/>
            <person name="Pitluck S."/>
            <person name="Chapman J."/>
            <person name="Putnam N.H."/>
            <person name="Brunner A."/>
            <person name="Busov V."/>
            <person name="Campbell M."/>
            <person name="Chalot M."/>
            <person name="Covert S."/>
            <person name="Davis J."/>
            <person name="DiFazio S."/>
            <person name="Gribskov M."/>
            <person name="Gunter L."/>
            <person name="Hamberger B."/>
            <person name="Jansson S."/>
            <person name="Joshi C."/>
            <person name="Larimer F."/>
            <person name="Martin F."/>
            <person name="Napoli C."/>
            <person name="Nelson D."/>
            <person name="Ralph S."/>
            <person name="Rombauts S."/>
            <person name="Rouze P."/>
            <person name="Schrader J."/>
            <person name="Tsai C."/>
            <person name="Vahala J."/>
            <person name="Tuskan G."/>
            <person name="Rokhsar D."/>
        </authorList>
    </citation>
    <scope>GENOME REANNOTATION</scope>
    <source>
        <strain>cv. Nisqually</strain>
    </source>
</reference>
<reference key="3">
    <citation type="journal article" date="2014" name="Plant Physiol.">
        <title>Functional and evolutionary analysis of the CASPARIAN STRIP MEMBRANE DOMAIN PROTEIN family.</title>
        <authorList>
            <person name="Roppolo D."/>
            <person name="Boeckmann B."/>
            <person name="Pfister A."/>
            <person name="Boutet E."/>
            <person name="Rubio M.C."/>
            <person name="Denervaud-Tendon V."/>
            <person name="Vermeer J.E."/>
            <person name="Gheyselinck J."/>
            <person name="Xenarios I."/>
            <person name="Geldner N."/>
        </authorList>
    </citation>
    <scope>GENE FAMILY</scope>
    <scope>NOMENCLATURE</scope>
</reference>
<keyword id="KW-1003">Cell membrane</keyword>
<keyword id="KW-0325">Glycoprotein</keyword>
<keyword id="KW-0472">Membrane</keyword>
<keyword id="KW-1185">Reference proteome</keyword>
<keyword id="KW-0812">Transmembrane</keyword>
<keyword id="KW-1133">Transmembrane helix</keyword>
<protein>
    <recommendedName>
        <fullName>CASP-like protein 3A2</fullName>
        <shortName>PtCASPL3A2</shortName>
    </recommendedName>
</protein>
<gene>
    <name type="ORF">POPTRDRAFT_751837</name>
</gene>
<dbReference type="EMBL" id="CM009290">
    <property type="protein sequence ID" value="EEE84536.2"/>
    <property type="molecule type" value="Genomic_DNA"/>
</dbReference>
<dbReference type="RefSeq" id="XP_002299731.2">
    <property type="nucleotide sequence ID" value="XM_002299695.2"/>
</dbReference>
<dbReference type="SMR" id="B9GGL4"/>
<dbReference type="STRING" id="3694.B9GGL4"/>
<dbReference type="EnsemblPlants" id="Potri.001G188000.1.v4.1">
    <property type="protein sequence ID" value="Potri.001G188000.1.v4.1"/>
    <property type="gene ID" value="Potri.001G188000.v4.1"/>
</dbReference>
<dbReference type="Gramene" id="Potri.001G188000.1.v4.1">
    <property type="protein sequence ID" value="Potri.001G188000.1.v4.1"/>
    <property type="gene ID" value="Potri.001G188000.v4.1"/>
</dbReference>
<dbReference type="KEGG" id="pop:7470575"/>
<dbReference type="eggNOG" id="ENOG502RN9B">
    <property type="taxonomic scope" value="Eukaryota"/>
</dbReference>
<dbReference type="HOGENOM" id="CLU_114729_1_0_1"/>
<dbReference type="InParanoid" id="B9GGL4"/>
<dbReference type="OMA" id="RTHAWLI"/>
<dbReference type="OrthoDB" id="1918787at2759"/>
<dbReference type="Proteomes" id="UP000006729">
    <property type="component" value="Chromosome 1"/>
</dbReference>
<dbReference type="ExpressionAtlas" id="B9GGL4">
    <property type="expression patterns" value="baseline and differential"/>
</dbReference>
<dbReference type="GO" id="GO:0005886">
    <property type="term" value="C:plasma membrane"/>
    <property type="evidence" value="ECO:0007669"/>
    <property type="project" value="UniProtKB-SubCell"/>
</dbReference>
<dbReference type="InterPro" id="IPR006459">
    <property type="entry name" value="CASP/CASPL"/>
</dbReference>
<dbReference type="InterPro" id="IPR006702">
    <property type="entry name" value="CASP_dom"/>
</dbReference>
<dbReference type="NCBIfam" id="TIGR01569">
    <property type="entry name" value="A_tha_TIGR01569"/>
    <property type="match status" value="1"/>
</dbReference>
<dbReference type="PANTHER" id="PTHR33573:SF48">
    <property type="entry name" value="CASP-LIKE PROTEIN 3A1"/>
    <property type="match status" value="1"/>
</dbReference>
<dbReference type="PANTHER" id="PTHR33573">
    <property type="entry name" value="CASP-LIKE PROTEIN 4A4"/>
    <property type="match status" value="1"/>
</dbReference>
<dbReference type="Pfam" id="PF04535">
    <property type="entry name" value="CASP_dom"/>
    <property type="match status" value="1"/>
</dbReference>
<proteinExistence type="evidence at transcript level"/>
<comment type="subunit">
    <text evidence="1">Homodimer and heterodimers.</text>
</comment>
<comment type="subcellular location">
    <subcellularLocation>
        <location evidence="1">Cell membrane</location>
        <topology evidence="1">Multi-pass membrane protein</topology>
    </subcellularLocation>
</comment>
<comment type="similarity">
    <text evidence="3">Belongs to the Casparian strip membrane proteins (CASP) family.</text>
</comment>
<evidence type="ECO:0000250" key="1"/>
<evidence type="ECO:0000255" key="2"/>
<evidence type="ECO:0000305" key="3"/>
<accession>B9GGL4</accession>
<name>CSPLN_POPTR</name>
<feature type="chain" id="PRO_0000391564" description="CASP-like protein 3A2">
    <location>
        <begin position="1"/>
        <end position="210"/>
    </location>
</feature>
<feature type="topological domain" description="Cytoplasmic" evidence="2">
    <location>
        <begin position="1"/>
        <end position="45"/>
    </location>
</feature>
<feature type="transmembrane region" description="Helical" evidence="2">
    <location>
        <begin position="46"/>
        <end position="66"/>
    </location>
</feature>
<feature type="topological domain" description="Extracellular" evidence="2">
    <location>
        <begin position="67"/>
        <end position="92"/>
    </location>
</feature>
<feature type="transmembrane region" description="Helical" evidence="2">
    <location>
        <begin position="93"/>
        <end position="113"/>
    </location>
</feature>
<feature type="topological domain" description="Cytoplasmic" evidence="2">
    <location>
        <begin position="114"/>
        <end position="128"/>
    </location>
</feature>
<feature type="transmembrane region" description="Helical" evidence="2">
    <location>
        <begin position="129"/>
        <end position="149"/>
    </location>
</feature>
<feature type="topological domain" description="Extracellular" evidence="2">
    <location>
        <begin position="150"/>
        <end position="178"/>
    </location>
</feature>
<feature type="transmembrane region" description="Helical" evidence="2">
    <location>
        <begin position="179"/>
        <end position="199"/>
    </location>
</feature>
<feature type="topological domain" description="Cytoplasmic" evidence="2">
    <location>
        <begin position="200"/>
        <end position="210"/>
    </location>
</feature>
<feature type="glycosylation site" description="N-linked (GlcNAc...) asparagine" evidence="2">
    <location>
        <position position="157"/>
    </location>
</feature>